<reference key="1">
    <citation type="submission" date="2006-09" db="EMBL/GenBank/DDBJ databases">
        <title>Complete sequence of chromosome 1 of Shewanella sp. ANA-3.</title>
        <authorList>
            <person name="Copeland A."/>
            <person name="Lucas S."/>
            <person name="Lapidus A."/>
            <person name="Barry K."/>
            <person name="Detter J.C."/>
            <person name="Glavina del Rio T."/>
            <person name="Hammon N."/>
            <person name="Israni S."/>
            <person name="Dalin E."/>
            <person name="Tice H."/>
            <person name="Pitluck S."/>
            <person name="Chertkov O."/>
            <person name="Brettin T."/>
            <person name="Bruce D."/>
            <person name="Han C."/>
            <person name="Tapia R."/>
            <person name="Gilna P."/>
            <person name="Schmutz J."/>
            <person name="Larimer F."/>
            <person name="Land M."/>
            <person name="Hauser L."/>
            <person name="Kyrpides N."/>
            <person name="Kim E."/>
            <person name="Newman D."/>
            <person name="Salticov C."/>
            <person name="Konstantinidis K."/>
            <person name="Klappenback J."/>
            <person name="Tiedje J."/>
            <person name="Richardson P."/>
        </authorList>
    </citation>
    <scope>NUCLEOTIDE SEQUENCE [LARGE SCALE GENOMIC DNA]</scope>
    <source>
        <strain>ANA-3</strain>
    </source>
</reference>
<accession>A0KWH4</accession>
<organism>
    <name type="scientific">Shewanella sp. (strain ANA-3)</name>
    <dbReference type="NCBI Taxonomy" id="94122"/>
    <lineage>
        <taxon>Bacteria</taxon>
        <taxon>Pseudomonadati</taxon>
        <taxon>Pseudomonadota</taxon>
        <taxon>Gammaproteobacteria</taxon>
        <taxon>Alteromonadales</taxon>
        <taxon>Shewanellaceae</taxon>
        <taxon>Shewanella</taxon>
    </lineage>
</organism>
<sequence length="381" mass="41475">MTHASNTHPVTELTKELIARPSVTPLDEGCQTLMAERLAAIGFNIEPMVFEDTTNMWARRGNEGPVFCFAGHTDVVPAGDLSRWHTPPFEPTIIDGYLYGRGAADMKGSLAAMIVATERFVAKHPNHPGSIAFLITSDEEGPFINGTTRVIDTLEARNEKITWTLVGEPSSTLKLGDVVKNGRRGSLTANLTVKGIQGHVAYPHLADNPIHKAAPFLAELSQTHWDNGNEFFPPTSMQIANINGGTGASNVIPGTLEVMFNFRYSTEVTAEILIERVEALLTAHELDYDISWTFNGLPFLTGEGPLLDATRHAIRQITGYDTDPQTTGGTSDGRFIAPTGAKVLELGPVNATIHKVNECVKIDDLEQLALCYEVILEQLLC</sequence>
<feature type="chain" id="PRO_0000375740" description="Succinyl-diaminopimelate desuccinylase">
    <location>
        <begin position="1"/>
        <end position="381"/>
    </location>
</feature>
<feature type="active site" evidence="1">
    <location>
        <position position="74"/>
    </location>
</feature>
<feature type="active site" description="Proton acceptor" evidence="1">
    <location>
        <position position="139"/>
    </location>
</feature>
<feature type="binding site" evidence="1">
    <location>
        <position position="72"/>
    </location>
    <ligand>
        <name>Zn(2+)</name>
        <dbReference type="ChEBI" id="CHEBI:29105"/>
        <label>1</label>
    </ligand>
</feature>
<feature type="binding site" evidence="1">
    <location>
        <position position="105"/>
    </location>
    <ligand>
        <name>Zn(2+)</name>
        <dbReference type="ChEBI" id="CHEBI:29105"/>
        <label>1</label>
    </ligand>
</feature>
<feature type="binding site" evidence="1">
    <location>
        <position position="105"/>
    </location>
    <ligand>
        <name>Zn(2+)</name>
        <dbReference type="ChEBI" id="CHEBI:29105"/>
        <label>2</label>
    </ligand>
</feature>
<feature type="binding site" evidence="1">
    <location>
        <position position="140"/>
    </location>
    <ligand>
        <name>Zn(2+)</name>
        <dbReference type="ChEBI" id="CHEBI:29105"/>
        <label>2</label>
    </ligand>
</feature>
<feature type="binding site" evidence="1">
    <location>
        <position position="168"/>
    </location>
    <ligand>
        <name>Zn(2+)</name>
        <dbReference type="ChEBI" id="CHEBI:29105"/>
        <label>1</label>
    </ligand>
</feature>
<feature type="binding site" evidence="1">
    <location>
        <position position="354"/>
    </location>
    <ligand>
        <name>Zn(2+)</name>
        <dbReference type="ChEBI" id="CHEBI:29105"/>
        <label>2</label>
    </ligand>
</feature>
<name>DAPE_SHESA</name>
<dbReference type="EC" id="3.5.1.18" evidence="1"/>
<dbReference type="EMBL" id="CP000469">
    <property type="protein sequence ID" value="ABK48143.1"/>
    <property type="molecule type" value="Genomic_DNA"/>
</dbReference>
<dbReference type="RefSeq" id="WP_011716910.1">
    <property type="nucleotide sequence ID" value="NC_008577.1"/>
</dbReference>
<dbReference type="SMR" id="A0KWH4"/>
<dbReference type="STRING" id="94122.Shewana3_1912"/>
<dbReference type="KEGG" id="shn:Shewana3_1912"/>
<dbReference type="eggNOG" id="COG0624">
    <property type="taxonomic scope" value="Bacteria"/>
</dbReference>
<dbReference type="HOGENOM" id="CLU_021802_4_0_6"/>
<dbReference type="OrthoDB" id="9809784at2"/>
<dbReference type="UniPathway" id="UPA00034">
    <property type="reaction ID" value="UER00021"/>
</dbReference>
<dbReference type="Proteomes" id="UP000002589">
    <property type="component" value="Chromosome"/>
</dbReference>
<dbReference type="GO" id="GO:0008777">
    <property type="term" value="F:acetylornithine deacetylase activity"/>
    <property type="evidence" value="ECO:0007669"/>
    <property type="project" value="TreeGrafter"/>
</dbReference>
<dbReference type="GO" id="GO:0050897">
    <property type="term" value="F:cobalt ion binding"/>
    <property type="evidence" value="ECO:0007669"/>
    <property type="project" value="UniProtKB-UniRule"/>
</dbReference>
<dbReference type="GO" id="GO:0009014">
    <property type="term" value="F:succinyl-diaminopimelate desuccinylase activity"/>
    <property type="evidence" value="ECO:0007669"/>
    <property type="project" value="UniProtKB-UniRule"/>
</dbReference>
<dbReference type="GO" id="GO:0008270">
    <property type="term" value="F:zinc ion binding"/>
    <property type="evidence" value="ECO:0007669"/>
    <property type="project" value="UniProtKB-UniRule"/>
</dbReference>
<dbReference type="GO" id="GO:0019877">
    <property type="term" value="P:diaminopimelate biosynthetic process"/>
    <property type="evidence" value="ECO:0007669"/>
    <property type="project" value="UniProtKB-UniRule"/>
</dbReference>
<dbReference type="GO" id="GO:0006526">
    <property type="term" value="P:L-arginine biosynthetic process"/>
    <property type="evidence" value="ECO:0007669"/>
    <property type="project" value="TreeGrafter"/>
</dbReference>
<dbReference type="GO" id="GO:0009089">
    <property type="term" value="P:lysine biosynthetic process via diaminopimelate"/>
    <property type="evidence" value="ECO:0007669"/>
    <property type="project" value="UniProtKB-UniRule"/>
</dbReference>
<dbReference type="CDD" id="cd03891">
    <property type="entry name" value="M20_DapE_proteobac"/>
    <property type="match status" value="1"/>
</dbReference>
<dbReference type="FunFam" id="3.30.70.360:FF:000011">
    <property type="entry name" value="Succinyl-diaminopimelate desuccinylase"/>
    <property type="match status" value="1"/>
</dbReference>
<dbReference type="FunFam" id="3.40.630.10:FF:000005">
    <property type="entry name" value="Succinyl-diaminopimelate desuccinylase"/>
    <property type="match status" value="1"/>
</dbReference>
<dbReference type="FunFam" id="3.40.630.10:FF:000192">
    <property type="entry name" value="Succinyl-diaminopimelate desuccinylase"/>
    <property type="match status" value="1"/>
</dbReference>
<dbReference type="Gene3D" id="3.40.630.10">
    <property type="entry name" value="Zn peptidases"/>
    <property type="match status" value="2"/>
</dbReference>
<dbReference type="HAMAP" id="MF_01690">
    <property type="entry name" value="DapE"/>
    <property type="match status" value="1"/>
</dbReference>
<dbReference type="InterPro" id="IPR001261">
    <property type="entry name" value="ArgE/DapE_CS"/>
</dbReference>
<dbReference type="InterPro" id="IPR036264">
    <property type="entry name" value="Bact_exopeptidase_dim_dom"/>
</dbReference>
<dbReference type="InterPro" id="IPR005941">
    <property type="entry name" value="DapE_proteobac"/>
</dbReference>
<dbReference type="InterPro" id="IPR002933">
    <property type="entry name" value="Peptidase_M20"/>
</dbReference>
<dbReference type="InterPro" id="IPR011650">
    <property type="entry name" value="Peptidase_M20_dimer"/>
</dbReference>
<dbReference type="InterPro" id="IPR050072">
    <property type="entry name" value="Peptidase_M20A"/>
</dbReference>
<dbReference type="NCBIfam" id="TIGR01246">
    <property type="entry name" value="dapE_proteo"/>
    <property type="match status" value="1"/>
</dbReference>
<dbReference type="NCBIfam" id="NF009557">
    <property type="entry name" value="PRK13009.1"/>
    <property type="match status" value="1"/>
</dbReference>
<dbReference type="PANTHER" id="PTHR43808">
    <property type="entry name" value="ACETYLORNITHINE DEACETYLASE"/>
    <property type="match status" value="1"/>
</dbReference>
<dbReference type="PANTHER" id="PTHR43808:SF31">
    <property type="entry name" value="N-ACETYL-L-CITRULLINE DEACETYLASE"/>
    <property type="match status" value="1"/>
</dbReference>
<dbReference type="Pfam" id="PF07687">
    <property type="entry name" value="M20_dimer"/>
    <property type="match status" value="1"/>
</dbReference>
<dbReference type="Pfam" id="PF01546">
    <property type="entry name" value="Peptidase_M20"/>
    <property type="match status" value="1"/>
</dbReference>
<dbReference type="SUPFAM" id="SSF55031">
    <property type="entry name" value="Bacterial exopeptidase dimerisation domain"/>
    <property type="match status" value="1"/>
</dbReference>
<dbReference type="SUPFAM" id="SSF53187">
    <property type="entry name" value="Zn-dependent exopeptidases"/>
    <property type="match status" value="1"/>
</dbReference>
<dbReference type="PROSITE" id="PS00759">
    <property type="entry name" value="ARGE_DAPE_CPG2_2"/>
    <property type="match status" value="1"/>
</dbReference>
<gene>
    <name evidence="1" type="primary">dapE</name>
    <name type="ordered locus">Shewana3_1912</name>
</gene>
<keyword id="KW-0028">Amino-acid biosynthesis</keyword>
<keyword id="KW-0170">Cobalt</keyword>
<keyword id="KW-0220">Diaminopimelate biosynthesis</keyword>
<keyword id="KW-0378">Hydrolase</keyword>
<keyword id="KW-0457">Lysine biosynthesis</keyword>
<keyword id="KW-0479">Metal-binding</keyword>
<keyword id="KW-0862">Zinc</keyword>
<proteinExistence type="inferred from homology"/>
<evidence type="ECO:0000255" key="1">
    <source>
        <dbReference type="HAMAP-Rule" id="MF_01690"/>
    </source>
</evidence>
<protein>
    <recommendedName>
        <fullName evidence="1">Succinyl-diaminopimelate desuccinylase</fullName>
        <shortName evidence="1">SDAP desuccinylase</shortName>
        <ecNumber evidence="1">3.5.1.18</ecNumber>
    </recommendedName>
    <alternativeName>
        <fullName evidence="1">N-succinyl-LL-2,6-diaminoheptanedioate amidohydrolase</fullName>
    </alternativeName>
</protein>
<comment type="function">
    <text evidence="1">Catalyzes the hydrolysis of N-succinyl-L,L-diaminopimelic acid (SDAP), forming succinate and LL-2,6-diaminopimelate (DAP), an intermediate involved in the bacterial biosynthesis of lysine and meso-diaminopimelic acid, an essential component of bacterial cell walls.</text>
</comment>
<comment type="catalytic activity">
    <reaction evidence="1">
        <text>N-succinyl-(2S,6S)-2,6-diaminopimelate + H2O = (2S,6S)-2,6-diaminopimelate + succinate</text>
        <dbReference type="Rhea" id="RHEA:22608"/>
        <dbReference type="ChEBI" id="CHEBI:15377"/>
        <dbReference type="ChEBI" id="CHEBI:30031"/>
        <dbReference type="ChEBI" id="CHEBI:57609"/>
        <dbReference type="ChEBI" id="CHEBI:58087"/>
        <dbReference type="EC" id="3.5.1.18"/>
    </reaction>
</comment>
<comment type="cofactor">
    <cofactor evidence="1">
        <name>Zn(2+)</name>
        <dbReference type="ChEBI" id="CHEBI:29105"/>
    </cofactor>
    <cofactor evidence="1">
        <name>Co(2+)</name>
        <dbReference type="ChEBI" id="CHEBI:48828"/>
    </cofactor>
    <text evidence="1">Binds 2 Zn(2+) or Co(2+) ions per subunit.</text>
</comment>
<comment type="pathway">
    <text evidence="1">Amino-acid biosynthesis; L-lysine biosynthesis via DAP pathway; LL-2,6-diaminopimelate from (S)-tetrahydrodipicolinate (succinylase route): step 3/3.</text>
</comment>
<comment type="subunit">
    <text evidence="1">Homodimer.</text>
</comment>
<comment type="similarity">
    <text evidence="1">Belongs to the peptidase M20A family. DapE subfamily.</text>
</comment>